<sequence length="109" mass="12015">MFGKGGLGNLMKQAQQMQEKMQKMQEEIAQLEVTGESGAGLVKVTINGAHNCRRVEIDPSLLEDDKEMLEDLVAAAFNDAARRIEETQKEKMASVSSGMQLPPGFKMPF</sequence>
<keyword id="KW-0963">Cytoplasm</keyword>
<keyword id="KW-0238">DNA-binding</keyword>
<keyword id="KW-1185">Reference proteome</keyword>
<dbReference type="EMBL" id="CU928161">
    <property type="protein sequence ID" value="CAR01815.1"/>
    <property type="molecule type" value="Genomic_DNA"/>
</dbReference>
<dbReference type="RefSeq" id="WP_000467098.1">
    <property type="nucleotide sequence ID" value="NC_011742.1"/>
</dbReference>
<dbReference type="SMR" id="B7MDZ3"/>
<dbReference type="KEGG" id="ecz:ECS88_0468"/>
<dbReference type="HOGENOM" id="CLU_140930_0_0_6"/>
<dbReference type="Proteomes" id="UP000000747">
    <property type="component" value="Chromosome"/>
</dbReference>
<dbReference type="GO" id="GO:0043590">
    <property type="term" value="C:bacterial nucleoid"/>
    <property type="evidence" value="ECO:0007669"/>
    <property type="project" value="UniProtKB-UniRule"/>
</dbReference>
<dbReference type="GO" id="GO:0005829">
    <property type="term" value="C:cytosol"/>
    <property type="evidence" value="ECO:0007669"/>
    <property type="project" value="TreeGrafter"/>
</dbReference>
<dbReference type="GO" id="GO:0003677">
    <property type="term" value="F:DNA binding"/>
    <property type="evidence" value="ECO:0007669"/>
    <property type="project" value="UniProtKB-UniRule"/>
</dbReference>
<dbReference type="FunFam" id="3.30.1310.10:FF:000001">
    <property type="entry name" value="Nucleoid-associated protein YbaB"/>
    <property type="match status" value="1"/>
</dbReference>
<dbReference type="Gene3D" id="3.30.1310.10">
    <property type="entry name" value="Nucleoid-associated protein YbaB-like domain"/>
    <property type="match status" value="1"/>
</dbReference>
<dbReference type="HAMAP" id="MF_00274">
    <property type="entry name" value="DNA_YbaB_EbfC"/>
    <property type="match status" value="1"/>
</dbReference>
<dbReference type="InterPro" id="IPR036894">
    <property type="entry name" value="YbaB-like_sf"/>
</dbReference>
<dbReference type="InterPro" id="IPR004401">
    <property type="entry name" value="YbaB/EbfC"/>
</dbReference>
<dbReference type="NCBIfam" id="TIGR00103">
    <property type="entry name" value="DNA_YbaB_EbfC"/>
    <property type="match status" value="1"/>
</dbReference>
<dbReference type="PANTHER" id="PTHR33449">
    <property type="entry name" value="NUCLEOID-ASSOCIATED PROTEIN YBAB"/>
    <property type="match status" value="1"/>
</dbReference>
<dbReference type="PANTHER" id="PTHR33449:SF1">
    <property type="entry name" value="NUCLEOID-ASSOCIATED PROTEIN YBAB"/>
    <property type="match status" value="1"/>
</dbReference>
<dbReference type="Pfam" id="PF02575">
    <property type="entry name" value="YbaB_DNA_bd"/>
    <property type="match status" value="1"/>
</dbReference>
<dbReference type="PIRSF" id="PIRSF004555">
    <property type="entry name" value="UCP004555"/>
    <property type="match status" value="1"/>
</dbReference>
<dbReference type="SUPFAM" id="SSF82607">
    <property type="entry name" value="YbaB-like"/>
    <property type="match status" value="1"/>
</dbReference>
<accession>B7MDZ3</accession>
<evidence type="ECO:0000255" key="1">
    <source>
        <dbReference type="HAMAP-Rule" id="MF_00274"/>
    </source>
</evidence>
<reference key="1">
    <citation type="journal article" date="2009" name="PLoS Genet.">
        <title>Organised genome dynamics in the Escherichia coli species results in highly diverse adaptive paths.</title>
        <authorList>
            <person name="Touchon M."/>
            <person name="Hoede C."/>
            <person name="Tenaillon O."/>
            <person name="Barbe V."/>
            <person name="Baeriswyl S."/>
            <person name="Bidet P."/>
            <person name="Bingen E."/>
            <person name="Bonacorsi S."/>
            <person name="Bouchier C."/>
            <person name="Bouvet O."/>
            <person name="Calteau A."/>
            <person name="Chiapello H."/>
            <person name="Clermont O."/>
            <person name="Cruveiller S."/>
            <person name="Danchin A."/>
            <person name="Diard M."/>
            <person name="Dossat C."/>
            <person name="Karoui M.E."/>
            <person name="Frapy E."/>
            <person name="Garry L."/>
            <person name="Ghigo J.M."/>
            <person name="Gilles A.M."/>
            <person name="Johnson J."/>
            <person name="Le Bouguenec C."/>
            <person name="Lescat M."/>
            <person name="Mangenot S."/>
            <person name="Martinez-Jehanne V."/>
            <person name="Matic I."/>
            <person name="Nassif X."/>
            <person name="Oztas S."/>
            <person name="Petit M.A."/>
            <person name="Pichon C."/>
            <person name="Rouy Z."/>
            <person name="Ruf C.S."/>
            <person name="Schneider D."/>
            <person name="Tourret J."/>
            <person name="Vacherie B."/>
            <person name="Vallenet D."/>
            <person name="Medigue C."/>
            <person name="Rocha E.P.C."/>
            <person name="Denamur E."/>
        </authorList>
    </citation>
    <scope>NUCLEOTIDE SEQUENCE [LARGE SCALE GENOMIC DNA]</scope>
    <source>
        <strain>S88 / ExPEC</strain>
    </source>
</reference>
<comment type="function">
    <text evidence="1">Binds to DNA and alters its conformation. May be involved in regulation of gene expression, nucleoid organization and DNA protection.</text>
</comment>
<comment type="subunit">
    <text evidence="1">Homodimer.</text>
</comment>
<comment type="subcellular location">
    <subcellularLocation>
        <location evidence="1">Cytoplasm</location>
        <location evidence="1">Nucleoid</location>
    </subcellularLocation>
</comment>
<comment type="similarity">
    <text evidence="1">Belongs to the YbaB/EbfC family.</text>
</comment>
<proteinExistence type="inferred from homology"/>
<gene>
    <name evidence="1" type="primary">ybaB</name>
    <name type="ordered locus">ECS88_0468</name>
</gene>
<organism>
    <name type="scientific">Escherichia coli O45:K1 (strain S88 / ExPEC)</name>
    <dbReference type="NCBI Taxonomy" id="585035"/>
    <lineage>
        <taxon>Bacteria</taxon>
        <taxon>Pseudomonadati</taxon>
        <taxon>Pseudomonadota</taxon>
        <taxon>Gammaproteobacteria</taxon>
        <taxon>Enterobacterales</taxon>
        <taxon>Enterobacteriaceae</taxon>
        <taxon>Escherichia</taxon>
    </lineage>
</organism>
<name>YBAB_ECO45</name>
<feature type="chain" id="PRO_1000119318" description="Nucleoid-associated protein YbaB">
    <location>
        <begin position="1"/>
        <end position="109"/>
    </location>
</feature>
<protein>
    <recommendedName>
        <fullName evidence="1">Nucleoid-associated protein YbaB</fullName>
    </recommendedName>
</protein>